<dbReference type="EMBL" id="CM001235">
    <property type="protein sequence ID" value="EHA48976.1"/>
    <property type="molecule type" value="Genomic_DNA"/>
</dbReference>
<dbReference type="RefSeq" id="XP_003718560.1">
    <property type="nucleotide sequence ID" value="XM_003718512.1"/>
</dbReference>
<dbReference type="SMR" id="G4NBR8"/>
<dbReference type="STRING" id="242507.G4NBR8"/>
<dbReference type="EnsemblFungi" id="MGG_00501T0">
    <property type="protein sequence ID" value="MGG_00501T0"/>
    <property type="gene ID" value="MGG_00501"/>
</dbReference>
<dbReference type="GeneID" id="2674630"/>
<dbReference type="KEGG" id="mgr:MGG_00501"/>
<dbReference type="VEuPathDB" id="FungiDB:MGG_00501"/>
<dbReference type="eggNOG" id="KOG1721">
    <property type="taxonomic scope" value="Eukaryota"/>
</dbReference>
<dbReference type="HOGENOM" id="CLU_030977_1_0_1"/>
<dbReference type="InParanoid" id="G4NBR8"/>
<dbReference type="OMA" id="PFFYYNP"/>
<dbReference type="OrthoDB" id="654211at2759"/>
<dbReference type="PHI-base" id="PHI:3810"/>
<dbReference type="PHI-base" id="PHI:4065"/>
<dbReference type="Proteomes" id="UP000009058">
    <property type="component" value="Chromosome 5"/>
</dbReference>
<dbReference type="GO" id="GO:0005634">
    <property type="term" value="C:nucleus"/>
    <property type="evidence" value="ECO:0007669"/>
    <property type="project" value="UniProtKB-SubCell"/>
</dbReference>
<dbReference type="GO" id="GO:0003700">
    <property type="term" value="F:DNA-binding transcription factor activity"/>
    <property type="evidence" value="ECO:0007669"/>
    <property type="project" value="TreeGrafter"/>
</dbReference>
<dbReference type="GO" id="GO:0000978">
    <property type="term" value="F:RNA polymerase II cis-regulatory region sequence-specific DNA binding"/>
    <property type="evidence" value="ECO:0007669"/>
    <property type="project" value="TreeGrafter"/>
</dbReference>
<dbReference type="GO" id="GO:0008270">
    <property type="term" value="F:zinc ion binding"/>
    <property type="evidence" value="ECO:0007669"/>
    <property type="project" value="UniProtKB-KW"/>
</dbReference>
<dbReference type="GO" id="GO:0006357">
    <property type="term" value="P:regulation of transcription by RNA polymerase II"/>
    <property type="evidence" value="ECO:0007669"/>
    <property type="project" value="TreeGrafter"/>
</dbReference>
<dbReference type="FunFam" id="3.30.160.60:FF:000141">
    <property type="entry name" value="C2H2 zinc finger protein"/>
    <property type="match status" value="1"/>
</dbReference>
<dbReference type="FunFam" id="3.30.160.60:FF:000243">
    <property type="entry name" value="Probable transcription factor steA"/>
    <property type="match status" value="1"/>
</dbReference>
<dbReference type="Gene3D" id="3.30.160.60">
    <property type="entry name" value="Classic Zinc Finger"/>
    <property type="match status" value="2"/>
</dbReference>
<dbReference type="InterPro" id="IPR050589">
    <property type="entry name" value="Ikaros_C2H2-ZF"/>
</dbReference>
<dbReference type="InterPro" id="IPR036236">
    <property type="entry name" value="Znf_C2H2_sf"/>
</dbReference>
<dbReference type="InterPro" id="IPR013087">
    <property type="entry name" value="Znf_C2H2_type"/>
</dbReference>
<dbReference type="PANTHER" id="PTHR24404:SF114">
    <property type="entry name" value="KLUMPFUSS, ISOFORM B-RELATED"/>
    <property type="match status" value="1"/>
</dbReference>
<dbReference type="PANTHER" id="PTHR24404">
    <property type="entry name" value="ZINC FINGER PROTEIN"/>
    <property type="match status" value="1"/>
</dbReference>
<dbReference type="Pfam" id="PF00096">
    <property type="entry name" value="zf-C2H2"/>
    <property type="match status" value="2"/>
</dbReference>
<dbReference type="SMART" id="SM00355">
    <property type="entry name" value="ZnF_C2H2"/>
    <property type="match status" value="2"/>
</dbReference>
<dbReference type="SUPFAM" id="SSF57667">
    <property type="entry name" value="beta-beta-alpha zinc fingers"/>
    <property type="match status" value="1"/>
</dbReference>
<dbReference type="PROSITE" id="PS00028">
    <property type="entry name" value="ZINC_FINGER_C2H2_1"/>
    <property type="match status" value="2"/>
</dbReference>
<dbReference type="PROSITE" id="PS50157">
    <property type="entry name" value="ZINC_FINGER_C2H2_2"/>
    <property type="match status" value="2"/>
</dbReference>
<evidence type="ECO:0000255" key="1">
    <source>
        <dbReference type="PROSITE-ProRule" id="PRU00042"/>
    </source>
</evidence>
<evidence type="ECO:0000269" key="2">
    <source>
    </source>
</evidence>
<evidence type="ECO:0000269" key="3">
    <source>
    </source>
</evidence>
<evidence type="ECO:0000269" key="4">
    <source>
    </source>
</evidence>
<evidence type="ECO:0000303" key="5">
    <source>
    </source>
</evidence>
<keyword id="KW-0963">Cytoplasm</keyword>
<keyword id="KW-0238">DNA-binding</keyword>
<keyword id="KW-0479">Metal-binding</keyword>
<keyword id="KW-0539">Nucleus</keyword>
<keyword id="KW-1185">Reference proteome</keyword>
<keyword id="KW-0677">Repeat</keyword>
<keyword id="KW-0804">Transcription</keyword>
<keyword id="KW-0805">Transcription regulation</keyword>
<keyword id="KW-0843">Virulence</keyword>
<keyword id="KW-0862">Zinc</keyword>
<keyword id="KW-0863">Zinc-finger</keyword>
<gene>
    <name evidence="5" type="primary">MSN2</name>
    <name type="ORF">MGG_00501</name>
</gene>
<comment type="function">
    <text evidence="2 3 4">Transcription factor that acts as a key downstream transcription factor in the HOG1-MAPK pathway (PubMed:24405033, PubMed:32431008, PubMed:36774535). Regulates the expression of a series of downstream genes and controls vegetative growth, conidiogenesis, cell wall integrity, stress response, mitochondrial morphology, and pathogenicity (PubMed:24405033, PubMed:32431008, PubMed:36774535). Binds to a putative promoter region 1500 bp upstream of the start codons of the target genes MGG_07019, POX1 and DCI1 (PubMed:32431008, PubMed:36774535). Binds to the AGGGG and CCCCT motif of the COS1 promoter region (PubMed:24405033). Involved in fatty acid beta-oxidation by directly regulating the expression of the dienoyl-CoA isomerase DCI1, thereby facilitating invasive hyphal growth during the early infection stage (PubMed:32431008, PubMed:36774535). Targets also the 3-methylglutaconyl-CoA hydratase-encoding gene (AUH1) to control mitochondrial morphology and mitophagy, which are critical for the infectious growth of the pathogen (PubMed:32431008).</text>
</comment>
<comment type="subunit">
    <text evidence="2">Interacts with HOG1/OSM1.</text>
</comment>
<comment type="subcellular location">
    <subcellularLocation>
        <location evidence="2 4">Nucleus</location>
    </subcellularLocation>
    <subcellularLocation>
        <location evidence="2 4">Cytoplasm</location>
    </subcellularLocation>
    <text evidence="4">Accumulates from the cytosol to the nucleus to promote fatty acid degradation and the cAMP signaling pathway activated by LRP1 is required for accumulation of cytosolic MSN2 in the nucleus.</text>
</comment>
<comment type="disruption phenotype">
    <text evidence="4">Leads to excessive accumulation of lipid droplets and restricts infectious growth in rice (PubMed:36774535). Results in fewer peroxisomes, more lipid droplets, and higher levels of phosphatidylglycerol, phosphatidylinositol, diacylglycerol, triacylglycerol and free fatty acids (PubMed:36774535).</text>
</comment>
<name>MSN2_PYRO7</name>
<reference key="1">
    <citation type="journal article" date="2005" name="Nature">
        <title>The genome sequence of the rice blast fungus Magnaporthe grisea.</title>
        <authorList>
            <person name="Dean R.A."/>
            <person name="Talbot N.J."/>
            <person name="Ebbole D.J."/>
            <person name="Farman M.L."/>
            <person name="Mitchell T.K."/>
            <person name="Orbach M.J."/>
            <person name="Thon M.R."/>
            <person name="Kulkarni R."/>
            <person name="Xu J.-R."/>
            <person name="Pan H."/>
            <person name="Read N.D."/>
            <person name="Lee Y.-H."/>
            <person name="Carbone I."/>
            <person name="Brown D."/>
            <person name="Oh Y.Y."/>
            <person name="Donofrio N."/>
            <person name="Jeong J.S."/>
            <person name="Soanes D.M."/>
            <person name="Djonovic S."/>
            <person name="Kolomiets E."/>
            <person name="Rehmeyer C."/>
            <person name="Li W."/>
            <person name="Harding M."/>
            <person name="Kim S."/>
            <person name="Lebrun M.-H."/>
            <person name="Bohnert H."/>
            <person name="Coughlan S."/>
            <person name="Butler J."/>
            <person name="Calvo S.E."/>
            <person name="Ma L.-J."/>
            <person name="Nicol R."/>
            <person name="Purcell S."/>
            <person name="Nusbaum C."/>
            <person name="Galagan J.E."/>
            <person name="Birren B.W."/>
        </authorList>
    </citation>
    <scope>NUCLEOTIDE SEQUENCE [LARGE SCALE GENOMIC DNA]</scope>
    <source>
        <strain>70-15 / ATCC MYA-4617 / FGSC 8958</strain>
    </source>
</reference>
<reference key="2">
    <citation type="journal article" date="2014" name="Mol. Plant Microbe Interact.">
        <title>Pleiotropic function of the putative zinc-finger protein MoMsn2 in Magnaporthe oryzae.</title>
        <authorList>
            <person name="Zhang H."/>
            <person name="Zhao Q."/>
            <person name="Guo X."/>
            <person name="Guo M."/>
            <person name="Qi Z."/>
            <person name="Tang W."/>
            <person name="Dong Y."/>
            <person name="Ye W."/>
            <person name="Zheng X."/>
            <person name="Wang P."/>
            <person name="Zhang Z."/>
        </authorList>
    </citation>
    <scope>FUNCTION</scope>
    <scope>INTERACTION WITH HOG1/OSM1</scope>
    <scope>DISRUPTION PHENOTYPE</scope>
    <scope>SUBCELLULAR LOCATION</scope>
</reference>
<reference key="3">
    <citation type="journal article" date="2021" name="Environ. Microbiol.">
        <title>Transcription factor MoMsn2 targets the putative 3-methylglutaconyl-CoA hydratase-encoding gene MoAUH1 to govern infectious growth via mitochondrial fusion/fission balance in Magnaporthe oryzae.</title>
        <authorList>
            <person name="Xiao Y."/>
            <person name="Liu L."/>
            <person name="Zhang T."/>
            <person name="Zhou R."/>
            <person name="Ren Y."/>
            <person name="Li X."/>
            <person name="Shu H."/>
            <person name="Ye W."/>
            <person name="Zheng X."/>
            <person name="Zhang Z."/>
            <person name="Zhang H."/>
        </authorList>
    </citation>
    <scope>FUNCTION</scope>
</reference>
<reference key="4">
    <citation type="journal article" date="2023" name="Plant Commun.">
        <title>MoLrp1-mediated signaling induces nuclear accumulation of MoMsn2 to facilitate fatty acid oxidation for infectious growth of the rice blast fungus.</title>
        <authorList>
            <person name="Zhang T."/>
            <person name="Wang X."/>
            <person name="Li X."/>
            <person name="Li Y.N."/>
            <person name="Li Y."/>
            <person name="Wu S."/>
            <person name="Xu L."/>
            <person name="Zhou R."/>
            <person name="Yang J."/>
            <person name="Li G."/>
            <person name="Liu X."/>
            <person name="Zheng X."/>
            <person name="Zhang Z."/>
            <person name="Zhang H."/>
        </authorList>
    </citation>
    <scope>FUNCTION</scope>
    <scope>SUBCELLULAR LOCATION</scope>
</reference>
<feature type="chain" id="PRO_0000462283" description="C2H2-type transcription factor MSN2">
    <location>
        <begin position="1"/>
        <end position="548"/>
    </location>
</feature>
<feature type="zinc finger region" description="C2H2-type 1" evidence="1">
    <location>
        <begin position="420"/>
        <end position="448"/>
    </location>
</feature>
<feature type="zinc finger region" description="C2H2-type 2" evidence="1">
    <location>
        <begin position="449"/>
        <end position="471"/>
    </location>
</feature>
<organism>
    <name type="scientific">Pyricularia oryzae (strain 70-15 / ATCC MYA-4617 / FGSC 8958)</name>
    <name type="common">Rice blast fungus</name>
    <name type="synonym">Magnaporthe oryzae</name>
    <dbReference type="NCBI Taxonomy" id="242507"/>
    <lineage>
        <taxon>Eukaryota</taxon>
        <taxon>Fungi</taxon>
        <taxon>Dikarya</taxon>
        <taxon>Ascomycota</taxon>
        <taxon>Pezizomycotina</taxon>
        <taxon>Sordariomycetes</taxon>
        <taxon>Sordariomycetidae</taxon>
        <taxon>Magnaporthales</taxon>
        <taxon>Pyriculariaceae</taxon>
        <taxon>Pyricularia</taxon>
    </lineage>
</organism>
<proteinExistence type="evidence at protein level"/>
<accession>G4NBR8</accession>
<protein>
    <recommendedName>
        <fullName evidence="5">C2H2-type transcription factor MSN2</fullName>
    </recommendedName>
</protein>
<sequence>MESMMAAHPMYMMQYQYDNRQHAHYAHLPSQQPMAFYPAVPMVPSTPTYSRPASACSQPAMQSMKQMPMTSYPSAMTPMASPQPMARRSNIVLETEACDWEGKRHQAHGIYYPSTPPLSSSGSAISSPESCDMLSTPMNPMFSGLDSIESIKPEVNSPESFPVLEWTSCASPPMTPVYLNNVNNNLHSKQNLRPAPTSSCSPELAPAVSACPSLSPSPVPQTRSFTSETSFCDPRNLTVGNVTLGLEPASLSTETLVAQADNSFVFVAPQAAPTWDAISELESEEDFVKGLVNLDDSKSDAQGTRTRASSDAVSLNFDEVEAFPLLPTAHTHSDDDCHKSKRQRTCGGPKMDSATNESASSAAAPSSEQQQQPKSSDVPSNEETKSNSGASTNSDGTGLPAPTSRRGRKQSLTEDPSKAFKCELCDRRFRRQEHLKRHYRSLHTQDKPFECNECGKKFSRSDNLTQHARTHGSGAIPLNIMGEEDLAAAAANGYMHPPQHMYSMVPNVPTLPDYNSYGKVLFQIAAEVPGSASDYSDDGSERKRKRTD</sequence>